<proteinExistence type="evidence at protein level"/>
<evidence type="ECO:0000250" key="1"/>
<evidence type="ECO:0000250" key="2">
    <source>
        <dbReference type="UniProtKB" id="Q9UQ52"/>
    </source>
</evidence>
<evidence type="ECO:0000255" key="3"/>
<evidence type="ECO:0000255" key="4">
    <source>
        <dbReference type="PROSITE-ProRule" id="PRU00114"/>
    </source>
</evidence>
<evidence type="ECO:0000255" key="5">
    <source>
        <dbReference type="PROSITE-ProRule" id="PRU00316"/>
    </source>
</evidence>
<evidence type="ECO:0000256" key="6">
    <source>
        <dbReference type="SAM" id="MobiDB-lite"/>
    </source>
</evidence>
<evidence type="ECO:0000269" key="7">
    <source>
    </source>
</evidence>
<evidence type="ECO:0000269" key="8">
    <source>
    </source>
</evidence>
<evidence type="ECO:0000305" key="9"/>
<organism>
    <name type="scientific">Rattus norvegicus</name>
    <name type="common">Rat</name>
    <dbReference type="NCBI Taxonomy" id="10116"/>
    <lineage>
        <taxon>Eukaryota</taxon>
        <taxon>Metazoa</taxon>
        <taxon>Chordata</taxon>
        <taxon>Craniata</taxon>
        <taxon>Vertebrata</taxon>
        <taxon>Euteleostomi</taxon>
        <taxon>Mammalia</taxon>
        <taxon>Eutheria</taxon>
        <taxon>Euarchontoglires</taxon>
        <taxon>Glires</taxon>
        <taxon>Rodentia</taxon>
        <taxon>Myomorpha</taxon>
        <taxon>Muroidea</taxon>
        <taxon>Muridae</taxon>
        <taxon>Murinae</taxon>
        <taxon>Rattus</taxon>
    </lineage>
</organism>
<feature type="signal peptide" evidence="3">
    <location>
        <begin position="1"/>
        <end position="19"/>
    </location>
</feature>
<feature type="chain" id="PRO_0000014731" description="Contactin-6">
    <location>
        <begin position="20"/>
        <end position="999"/>
    </location>
</feature>
<feature type="propeptide" id="PRO_0000014732" description="Removed in mature form" evidence="3">
    <location>
        <begin position="1000"/>
        <end position="1028"/>
    </location>
</feature>
<feature type="domain" description="Ig-like C2-type 1">
    <location>
        <begin position="32"/>
        <end position="117"/>
    </location>
</feature>
<feature type="domain" description="Ig-like C2-type 2">
    <location>
        <begin position="122"/>
        <end position="208"/>
    </location>
</feature>
<feature type="domain" description="Ig-like C2-type 3">
    <location>
        <begin position="227"/>
        <end position="308"/>
    </location>
</feature>
<feature type="domain" description="Ig-like C2-type 4">
    <location>
        <begin position="318"/>
        <end position="402"/>
    </location>
</feature>
<feature type="domain" description="Ig-like C2-type 5">
    <location>
        <begin position="408"/>
        <end position="495"/>
    </location>
</feature>
<feature type="domain" description="Ig-like C2-type 6">
    <location>
        <begin position="499"/>
        <end position="587"/>
    </location>
</feature>
<feature type="domain" description="Fibronectin type-III 1" evidence="5">
    <location>
        <begin position="600"/>
        <end position="698"/>
    </location>
</feature>
<feature type="domain" description="Fibronectin type-III 2" evidence="5">
    <location>
        <begin position="703"/>
        <end position="800"/>
    </location>
</feature>
<feature type="domain" description="Fibronectin type-III 3" evidence="5">
    <location>
        <begin position="805"/>
        <end position="901"/>
    </location>
</feature>
<feature type="domain" description="Fibronectin type-III 4" evidence="5">
    <location>
        <begin position="902"/>
        <end position="996"/>
    </location>
</feature>
<feature type="region of interest" description="Disordered" evidence="6">
    <location>
        <begin position="887"/>
        <end position="908"/>
    </location>
</feature>
<feature type="compositionally biased region" description="Polar residues" evidence="6">
    <location>
        <begin position="887"/>
        <end position="902"/>
    </location>
</feature>
<feature type="modified residue" description="Phosphotyrosine" evidence="2">
    <location>
        <position position="882"/>
    </location>
</feature>
<feature type="lipid moiety-binding region" description="GPI-anchor amidated serine" evidence="3">
    <location>
        <position position="999"/>
    </location>
</feature>
<feature type="glycosylation site" description="N-linked (GlcNAc...) asparagine" evidence="3">
    <location>
        <position position="65"/>
    </location>
</feature>
<feature type="glycosylation site" description="N-linked (GlcNAc...) asparagine" evidence="3">
    <location>
        <position position="193"/>
    </location>
</feature>
<feature type="glycosylation site" description="N-linked (GlcNAc...) asparagine" evidence="3">
    <location>
        <position position="368"/>
    </location>
</feature>
<feature type="glycosylation site" description="N-linked (GlcNAc...) asparagine" evidence="3">
    <location>
        <position position="377"/>
    </location>
</feature>
<feature type="glycosylation site" description="N-linked (GlcNAc...) asparagine" evidence="3">
    <location>
        <position position="468"/>
    </location>
</feature>
<feature type="glycosylation site" description="N-linked (GlcNAc...) asparagine" evidence="3">
    <location>
        <position position="659"/>
    </location>
</feature>
<feature type="glycosylation site" description="N-linked (GlcNAc...) asparagine" evidence="3">
    <location>
        <position position="765"/>
    </location>
</feature>
<feature type="glycosylation site" description="N-linked (GlcNAc...) asparagine" evidence="3">
    <location>
        <position position="860"/>
    </location>
</feature>
<feature type="glycosylation site" description="N-linked (GlcNAc...) asparagine" evidence="3">
    <location>
        <position position="865"/>
    </location>
</feature>
<feature type="glycosylation site" description="N-linked (GlcNAc...) asparagine" evidence="3">
    <location>
        <position position="895"/>
    </location>
</feature>
<feature type="glycosylation site" description="N-linked (GlcNAc...) asparagine" evidence="3">
    <location>
        <position position="931"/>
    </location>
</feature>
<feature type="glycosylation site" description="N-linked (GlcNAc...) asparagine" evidence="3">
    <location>
        <position position="956"/>
    </location>
</feature>
<feature type="glycosylation site" description="N-linked (GlcNAc...) asparagine" evidence="3">
    <location>
        <position position="957"/>
    </location>
</feature>
<feature type="disulfide bond" evidence="4">
    <location>
        <begin position="50"/>
        <end position="100"/>
    </location>
</feature>
<feature type="disulfide bond" evidence="4">
    <location>
        <begin position="144"/>
        <end position="196"/>
    </location>
</feature>
<feature type="disulfide bond" evidence="4">
    <location>
        <begin position="249"/>
        <end position="297"/>
    </location>
</feature>
<feature type="disulfide bond" evidence="4">
    <location>
        <begin position="339"/>
        <end position="386"/>
    </location>
</feature>
<feature type="disulfide bond" evidence="4">
    <location>
        <begin position="431"/>
        <end position="479"/>
    </location>
</feature>
<feature type="disulfide bond" evidence="4">
    <location>
        <begin position="521"/>
        <end position="577"/>
    </location>
</feature>
<sequence>MRLLWKLVILLPLINSCAGESRFTRPIFIQEPQDVIFPLDLSRSEIILSCTASGYPSPHYRWKQNGTDIDFSMTYHYRLDGGSLAISSPRTDQDIGIYQCLATNPVGTILSRKAKLQFAYIEDFETKSRSTVSVREGQGVVLLCGPPPHFGELSYDWTFNDNPLYVQEDKRRFVSQNTGNLYIAKVEPSDVGNYTCFVTNKEAHRSVQGPPTPLVQRTDGVMGEYEPKIEVRFPETIQAAKDSSVKLECFALGNPVPDISWRRLDGSPMPGKVKYSNSQATLEIPKFQQEDEGFYECVAGNLRGRNLAKGQLIFYAPPEWEQKIQNTYLSIYDSLFWECKASGNPNPSYTWLKNGERLNTEERIQTENGTLIITMLNVSDSGIYQCAAENKYQTIYANAELRVLASAPDFSKNPIKKISVVQVGGDISIECKPNAFPKASISWKRGTENLKQSKRVFFLEDGSLKICNVTRSDAGSYTCVATNQFGNGKSSGSLIVKERTVITVPPSKMDVTVGESIVLPCQVSHDPTMEVLFVWYFNGDVIDLKKGVAHFERIGGESVGDLMIRNIQLGHSGKYLCTVQTTLERLSAVADIIVRGPPGPPEDVKVEHISSTTSQLSWRPGPDNNSPIQIFTIQTRTPFSVGWQAVATVPEILNGQTYNATVIGLSPWVEYEFRVVAGNNIGIGEPSKPSELLRTKASIPNVAPVNINGGGGSRSELVITWEPIPEELQNGEGFGYIIMFRPVGSTTWMKEKVALVESSKFIYRNESIMPLSPFEVKVGVYNNEGEGSLSTVSIVYSGEDEPRLAPRGTSVQSFSASDMEVSWNAIAWNRNTGRVLGYEVLYWTDNSKESMIGKIRVSGNVTTKNITGLRANTIYFASVRAYNTAGTGPSSPPVNVTTKKSPPSQPPANIAWKLSNSKLCLNWEHVKTMENESEVLGYKILYRQNRQSKTHVLETNNTSAELLVPFEEDYLIEIRTVSDGGDGSSSEEIRIPKMSSLSSVGVQILKPSTQFLTMVGFFYCFVIQPLSR</sequence>
<keyword id="KW-0130">Cell adhesion</keyword>
<keyword id="KW-1003">Cell membrane</keyword>
<keyword id="KW-1015">Disulfide bond</keyword>
<keyword id="KW-0325">Glycoprotein</keyword>
<keyword id="KW-0336">GPI-anchor</keyword>
<keyword id="KW-0393">Immunoglobulin domain</keyword>
<keyword id="KW-0449">Lipoprotein</keyword>
<keyword id="KW-0472">Membrane</keyword>
<keyword id="KW-0914">Notch signaling pathway</keyword>
<keyword id="KW-0597">Phosphoprotein</keyword>
<keyword id="KW-1185">Reference proteome</keyword>
<keyword id="KW-0677">Repeat</keyword>
<keyword id="KW-0732">Signal</keyword>
<dbReference type="EMBL" id="D87248">
    <property type="protein sequence ID" value="BAA13320.1"/>
    <property type="molecule type" value="mRNA"/>
</dbReference>
<dbReference type="RefSeq" id="NP_037357.1">
    <property type="nucleotide sequence ID" value="NM_013225.2"/>
</dbReference>
<dbReference type="RefSeq" id="XP_038963084.1">
    <property type="nucleotide sequence ID" value="XM_039107156.2"/>
</dbReference>
<dbReference type="SMR" id="P97528"/>
<dbReference type="FunCoup" id="P97528">
    <property type="interactions" value="134"/>
</dbReference>
<dbReference type="STRING" id="10116.ENSRNOP00000047690"/>
<dbReference type="GlyCosmos" id="P97528">
    <property type="glycosylation" value="13 sites, No reported glycans"/>
</dbReference>
<dbReference type="GlyGen" id="P97528">
    <property type="glycosylation" value="13 sites"/>
</dbReference>
<dbReference type="PhosphoSitePlus" id="P97528"/>
<dbReference type="PaxDb" id="10116-ENSRNOP00000047690"/>
<dbReference type="Ensembl" id="ENSRNOT00000051645.5">
    <property type="protein sequence ID" value="ENSRNOP00000047690.5"/>
    <property type="gene ID" value="ENSRNOG00000032517.6"/>
</dbReference>
<dbReference type="GeneID" id="27256"/>
<dbReference type="KEGG" id="rno:27256"/>
<dbReference type="AGR" id="RGD:62008"/>
<dbReference type="CTD" id="27255"/>
<dbReference type="RGD" id="62008">
    <property type="gene designation" value="Cntn6"/>
</dbReference>
<dbReference type="eggNOG" id="KOG3513">
    <property type="taxonomic scope" value="Eukaryota"/>
</dbReference>
<dbReference type="GeneTree" id="ENSGT00940000160606"/>
<dbReference type="InParanoid" id="P97528"/>
<dbReference type="OMA" id="ICNVTRS"/>
<dbReference type="OrthoDB" id="5982258at2759"/>
<dbReference type="PhylomeDB" id="P97528"/>
<dbReference type="PRO" id="PR:P97528"/>
<dbReference type="Proteomes" id="UP000002494">
    <property type="component" value="Chromosome 4"/>
</dbReference>
<dbReference type="GO" id="GO:0043005">
    <property type="term" value="C:neuron projection"/>
    <property type="evidence" value="ECO:0000318"/>
    <property type="project" value="GO_Central"/>
</dbReference>
<dbReference type="GO" id="GO:0098688">
    <property type="term" value="C:parallel fiber to Purkinje cell synapse"/>
    <property type="evidence" value="ECO:0000266"/>
    <property type="project" value="RGD"/>
</dbReference>
<dbReference type="GO" id="GO:0005886">
    <property type="term" value="C:plasma membrane"/>
    <property type="evidence" value="ECO:0000266"/>
    <property type="project" value="RGD"/>
</dbReference>
<dbReference type="GO" id="GO:0098793">
    <property type="term" value="C:presynapse"/>
    <property type="evidence" value="ECO:0000266"/>
    <property type="project" value="RGD"/>
</dbReference>
<dbReference type="GO" id="GO:0042734">
    <property type="term" value="C:presynaptic membrane"/>
    <property type="evidence" value="ECO:0000266"/>
    <property type="project" value="RGD"/>
</dbReference>
<dbReference type="GO" id="GO:0098552">
    <property type="term" value="C:side of membrane"/>
    <property type="evidence" value="ECO:0007669"/>
    <property type="project" value="UniProtKB-KW"/>
</dbReference>
<dbReference type="GO" id="GO:0007155">
    <property type="term" value="P:cell adhesion"/>
    <property type="evidence" value="ECO:0007669"/>
    <property type="project" value="UniProtKB-KW"/>
</dbReference>
<dbReference type="GO" id="GO:0007219">
    <property type="term" value="P:Notch signaling pathway"/>
    <property type="evidence" value="ECO:0007669"/>
    <property type="project" value="UniProtKB-KW"/>
</dbReference>
<dbReference type="GO" id="GO:0045747">
    <property type="term" value="P:positive regulation of Notch signaling pathway"/>
    <property type="evidence" value="ECO:0000266"/>
    <property type="project" value="RGD"/>
</dbReference>
<dbReference type="CDD" id="cd00063">
    <property type="entry name" value="FN3"/>
    <property type="match status" value="4"/>
</dbReference>
<dbReference type="CDD" id="cd04969">
    <property type="entry name" value="Ig5_Contactin"/>
    <property type="match status" value="1"/>
</dbReference>
<dbReference type="FunFam" id="2.60.40.10:FF:000035">
    <property type="entry name" value="Contactin 1"/>
    <property type="match status" value="1"/>
</dbReference>
<dbReference type="FunFam" id="2.60.40.10:FF:000044">
    <property type="entry name" value="Contactin 1"/>
    <property type="match status" value="1"/>
</dbReference>
<dbReference type="FunFam" id="2.60.40.10:FF:000047">
    <property type="entry name" value="Contactin 1"/>
    <property type="match status" value="1"/>
</dbReference>
<dbReference type="FunFam" id="2.60.40.10:FF:000052">
    <property type="entry name" value="Contactin 1"/>
    <property type="match status" value="1"/>
</dbReference>
<dbReference type="FunFam" id="2.60.40.10:FF:000054">
    <property type="entry name" value="Contactin 1"/>
    <property type="match status" value="1"/>
</dbReference>
<dbReference type="FunFam" id="2.60.40.10:FF:000064">
    <property type="entry name" value="Contactin 1"/>
    <property type="match status" value="1"/>
</dbReference>
<dbReference type="FunFam" id="2.60.40.10:FF:000004">
    <property type="entry name" value="DCC isoform 1"/>
    <property type="match status" value="2"/>
</dbReference>
<dbReference type="FunFam" id="2.60.40.10:FF:000005">
    <property type="entry name" value="Neuronal cell adhesion molecule"/>
    <property type="match status" value="1"/>
</dbReference>
<dbReference type="FunFam" id="2.60.40.10:FF:000028">
    <property type="entry name" value="Neuronal cell adhesion molecule"/>
    <property type="match status" value="1"/>
</dbReference>
<dbReference type="Gene3D" id="2.60.40.10">
    <property type="entry name" value="Immunoglobulins"/>
    <property type="match status" value="10"/>
</dbReference>
<dbReference type="InterPro" id="IPR003961">
    <property type="entry name" value="FN3_dom"/>
</dbReference>
<dbReference type="InterPro" id="IPR036116">
    <property type="entry name" value="FN3_sf"/>
</dbReference>
<dbReference type="InterPro" id="IPR007110">
    <property type="entry name" value="Ig-like_dom"/>
</dbReference>
<dbReference type="InterPro" id="IPR036179">
    <property type="entry name" value="Ig-like_dom_sf"/>
</dbReference>
<dbReference type="InterPro" id="IPR013783">
    <property type="entry name" value="Ig-like_fold"/>
</dbReference>
<dbReference type="InterPro" id="IPR013098">
    <property type="entry name" value="Ig_I-set"/>
</dbReference>
<dbReference type="InterPro" id="IPR003599">
    <property type="entry name" value="Ig_sub"/>
</dbReference>
<dbReference type="InterPro" id="IPR003598">
    <property type="entry name" value="Ig_sub2"/>
</dbReference>
<dbReference type="PANTHER" id="PTHR44170:SF38">
    <property type="entry name" value="CONTACTIN 6"/>
    <property type="match status" value="1"/>
</dbReference>
<dbReference type="PANTHER" id="PTHR44170">
    <property type="entry name" value="PROTEIN SIDEKICK"/>
    <property type="match status" value="1"/>
</dbReference>
<dbReference type="Pfam" id="PF00041">
    <property type="entry name" value="fn3"/>
    <property type="match status" value="2"/>
</dbReference>
<dbReference type="Pfam" id="PF07679">
    <property type="entry name" value="I-set"/>
    <property type="match status" value="2"/>
</dbReference>
<dbReference type="Pfam" id="PF13927">
    <property type="entry name" value="Ig_3"/>
    <property type="match status" value="4"/>
</dbReference>
<dbReference type="SMART" id="SM00060">
    <property type="entry name" value="FN3"/>
    <property type="match status" value="4"/>
</dbReference>
<dbReference type="SMART" id="SM00409">
    <property type="entry name" value="IG"/>
    <property type="match status" value="6"/>
</dbReference>
<dbReference type="SMART" id="SM00408">
    <property type="entry name" value="IGc2"/>
    <property type="match status" value="6"/>
</dbReference>
<dbReference type="SUPFAM" id="SSF49265">
    <property type="entry name" value="Fibronectin type III"/>
    <property type="match status" value="2"/>
</dbReference>
<dbReference type="SUPFAM" id="SSF48726">
    <property type="entry name" value="Immunoglobulin"/>
    <property type="match status" value="6"/>
</dbReference>
<dbReference type="PROSITE" id="PS50853">
    <property type="entry name" value="FN3"/>
    <property type="match status" value="4"/>
</dbReference>
<dbReference type="PROSITE" id="PS50835">
    <property type="entry name" value="IG_LIKE"/>
    <property type="match status" value="6"/>
</dbReference>
<protein>
    <recommendedName>
        <fullName>Contactin-6</fullName>
    </recommendedName>
    <alternativeName>
        <fullName>Neural recognition molecule NB-3</fullName>
    </alternativeName>
</protein>
<accession>P97528</accession>
<comment type="function">
    <text evidence="7">Contactins mediate cell surface interactions during nervous system development. Participates in oligodendrocytes generation by acting as a ligand of NOTCH1. Its association with NOTCH1 promotes NOTCH1 activation through the released notch intracellular domain (NICD) and subsequent translocation to the nucleus. May be involved in motor coordination.</text>
</comment>
<comment type="subunit">
    <text evidence="1">Interacts with PTPRG.</text>
</comment>
<comment type="subcellular location">
    <subcellularLocation>
        <location>Cell membrane</location>
        <topology>Lipid-anchor</topology>
        <topology>GPI-anchor</topology>
    </subcellularLocation>
</comment>
<comment type="tissue specificity">
    <text evidence="7 8">Specifically expressed in neuronal cells. In brain, it is expressed in spinal cord, cerebrum and cerebellum. At 17 dpc, it is expressed in hippocampus, cerebellum, and the brain stem. Strongly expressed after birth with a maximum level between P1 and P21, which corresponds to the time frame of oligodendrogliogenesis.</text>
</comment>
<comment type="developmental stage">
    <text evidence="7">Expressed at low level during embryogenesis. Highly expressed after birth.</text>
</comment>
<comment type="similarity">
    <text evidence="9">Belongs to the immunoglobulin superfamily. Contactin family.</text>
</comment>
<gene>
    <name type="primary">Cntn6</name>
</gene>
<name>CNTN6_RAT</name>
<reference key="1">
    <citation type="journal article" date="1996" name="Neurosci. Lett.">
        <title>Novel neural adhesion molecules in the contactin/F3 subgroup of the immunoglobulin superfamily: isolation and characterization of cDNAs from rat brain.</title>
        <authorList>
            <person name="Ogawa J."/>
            <person name="Kaneko H."/>
            <person name="Masuda T."/>
            <person name="Nagata S."/>
            <person name="Hosoya H."/>
            <person name="Watanabe K."/>
        </authorList>
    </citation>
    <scope>NUCLEOTIDE SEQUENCE [MRNA]</scope>
    <scope>TISSUE SPECIFICITY</scope>
    <source>
        <strain>Wistar</strain>
        <tissue>Brain</tissue>
    </source>
</reference>
<reference key="2">
    <citation type="journal article" date="1997" name="Neurosci. Lett.">
        <authorList>
            <person name="Ogawa J."/>
            <person name="Kaneko H."/>
            <person name="Masuda T."/>
            <person name="Nagata S."/>
            <person name="Hosoya H."/>
            <person name="Watanabe K."/>
        </authorList>
    </citation>
    <scope>ERRATUM OF PUBMED:8945756</scope>
</reference>
<reference key="3">
    <citation type="journal article" date="2003" name="J. Neurobiol.">
        <title>Impaired motor coordination in mice lacking neural recognition molecule NB-3 of the contactin/F3 subgroup.</title>
        <authorList>
            <person name="Takeda Y."/>
            <person name="Akasaka K."/>
            <person name="Lee S."/>
            <person name="Kobayashi S."/>
            <person name="Kawano H."/>
            <person name="Murayama S."/>
            <person name="Takahashi N."/>
            <person name="Hashimoto K."/>
            <person name="Kano M."/>
            <person name="Asano M."/>
            <person name="Sudo K."/>
            <person name="Iwakura Y."/>
            <person name="Watanabe K."/>
        </authorList>
    </citation>
    <scope>GPI-ANCHOR</scope>
</reference>
<reference key="4">
    <citation type="journal article" date="2004" name="J. Biol. Chem.">
        <title>NB-3/Notch1 pathway via Deltex1 promotes neural progenitor cell differentiation into oligodendrocytes.</title>
        <authorList>
            <person name="Cui X.-Y."/>
            <person name="Hu Q.-D."/>
            <person name="Tekaya M."/>
            <person name="Shimoda Y."/>
            <person name="Ang B.-T."/>
            <person name="Nie D.-Y."/>
            <person name="Sun L."/>
            <person name="Hu W.-P."/>
            <person name="Karsak M."/>
            <person name="Duka T."/>
            <person name="Takeda Y."/>
            <person name="Ou L.-Y."/>
            <person name="Dawe G.S."/>
            <person name="Yu F.-G."/>
            <person name="Ahmed S."/>
            <person name="Jin L.-H."/>
            <person name="Schachner M."/>
            <person name="Watanabe K."/>
            <person name="Arsenijevic Y."/>
            <person name="Xiao Z.-C."/>
        </authorList>
    </citation>
    <scope>FUNCTION</scope>
    <scope>TISSUE SPECIFICITY</scope>
    <scope>DEVELOPMENTAL STAGE</scope>
    <scope>INTERACTION WITH NOTCH1</scope>
</reference>